<organism>
    <name type="scientific">Rhizobium leguminosarum bv. trifolii (strain WSM2304)</name>
    <dbReference type="NCBI Taxonomy" id="395492"/>
    <lineage>
        <taxon>Bacteria</taxon>
        <taxon>Pseudomonadati</taxon>
        <taxon>Pseudomonadota</taxon>
        <taxon>Alphaproteobacteria</taxon>
        <taxon>Hyphomicrobiales</taxon>
        <taxon>Rhizobiaceae</taxon>
        <taxon>Rhizobium/Agrobacterium group</taxon>
        <taxon>Rhizobium</taxon>
    </lineage>
</organism>
<protein>
    <recommendedName>
        <fullName evidence="1">Small ribosomal subunit protein uS3</fullName>
    </recommendedName>
    <alternativeName>
        <fullName evidence="3">30S ribosomal protein S3</fullName>
    </alternativeName>
</protein>
<gene>
    <name evidence="1" type="primary">rpsC</name>
    <name type="ordered locus">Rleg2_1338</name>
</gene>
<keyword id="KW-1185">Reference proteome</keyword>
<keyword id="KW-0687">Ribonucleoprotein</keyword>
<keyword id="KW-0689">Ribosomal protein</keyword>
<keyword id="KW-0694">RNA-binding</keyword>
<keyword id="KW-0699">rRNA-binding</keyword>
<sequence>MGQKINPIGFRLGINRTWDSRWFADNAEYGQLLHEDLKMRKFVMSELKQAGISKVVIERPHKKCRVTIHSARPGLIIGRKGADIDKLRKKLSDMTNSETHLNIVEVRKPEVDATLVAQSIAQQLERRVAFRRAMKRAVQSAMRLGAEGIKITCAGRLGGAEIARTEWYREGRVPLHTLRADIDYGTAEAETAFGICGIKVWIFKGEILEHDPMASERRAMEGDAQGPASRDRDRDRDRRRDNA</sequence>
<evidence type="ECO:0000255" key="1">
    <source>
        <dbReference type="HAMAP-Rule" id="MF_01309"/>
    </source>
</evidence>
<evidence type="ECO:0000256" key="2">
    <source>
        <dbReference type="SAM" id="MobiDB-lite"/>
    </source>
</evidence>
<evidence type="ECO:0000305" key="3"/>
<proteinExistence type="inferred from homology"/>
<dbReference type="EMBL" id="CP001191">
    <property type="protein sequence ID" value="ACI54632.1"/>
    <property type="molecule type" value="Genomic_DNA"/>
</dbReference>
<dbReference type="RefSeq" id="WP_003587196.1">
    <property type="nucleotide sequence ID" value="NC_011369.1"/>
</dbReference>
<dbReference type="SMR" id="B5ZYU1"/>
<dbReference type="STRING" id="395492.Rleg2_1338"/>
<dbReference type="GeneID" id="75219565"/>
<dbReference type="KEGG" id="rlt:Rleg2_1338"/>
<dbReference type="eggNOG" id="COG0092">
    <property type="taxonomic scope" value="Bacteria"/>
</dbReference>
<dbReference type="HOGENOM" id="CLU_058591_0_2_5"/>
<dbReference type="Proteomes" id="UP000008330">
    <property type="component" value="Chromosome"/>
</dbReference>
<dbReference type="GO" id="GO:0022627">
    <property type="term" value="C:cytosolic small ribosomal subunit"/>
    <property type="evidence" value="ECO:0007669"/>
    <property type="project" value="TreeGrafter"/>
</dbReference>
<dbReference type="GO" id="GO:0003729">
    <property type="term" value="F:mRNA binding"/>
    <property type="evidence" value="ECO:0007669"/>
    <property type="project" value="UniProtKB-UniRule"/>
</dbReference>
<dbReference type="GO" id="GO:0019843">
    <property type="term" value="F:rRNA binding"/>
    <property type="evidence" value="ECO:0007669"/>
    <property type="project" value="UniProtKB-UniRule"/>
</dbReference>
<dbReference type="GO" id="GO:0003735">
    <property type="term" value="F:structural constituent of ribosome"/>
    <property type="evidence" value="ECO:0007669"/>
    <property type="project" value="InterPro"/>
</dbReference>
<dbReference type="GO" id="GO:0006412">
    <property type="term" value="P:translation"/>
    <property type="evidence" value="ECO:0007669"/>
    <property type="project" value="UniProtKB-UniRule"/>
</dbReference>
<dbReference type="CDD" id="cd02412">
    <property type="entry name" value="KH-II_30S_S3"/>
    <property type="match status" value="1"/>
</dbReference>
<dbReference type="FunFam" id="3.30.1140.32:FF:000001">
    <property type="entry name" value="30S ribosomal protein S3"/>
    <property type="match status" value="1"/>
</dbReference>
<dbReference type="FunFam" id="3.30.300.20:FF:000001">
    <property type="entry name" value="30S ribosomal protein S3"/>
    <property type="match status" value="1"/>
</dbReference>
<dbReference type="Gene3D" id="3.30.300.20">
    <property type="match status" value="1"/>
</dbReference>
<dbReference type="Gene3D" id="3.30.1140.32">
    <property type="entry name" value="Ribosomal protein S3, C-terminal domain"/>
    <property type="match status" value="1"/>
</dbReference>
<dbReference type="HAMAP" id="MF_01309_B">
    <property type="entry name" value="Ribosomal_uS3_B"/>
    <property type="match status" value="1"/>
</dbReference>
<dbReference type="InterPro" id="IPR004087">
    <property type="entry name" value="KH_dom"/>
</dbReference>
<dbReference type="InterPro" id="IPR015946">
    <property type="entry name" value="KH_dom-like_a/b"/>
</dbReference>
<dbReference type="InterPro" id="IPR004044">
    <property type="entry name" value="KH_dom_type_2"/>
</dbReference>
<dbReference type="InterPro" id="IPR009019">
    <property type="entry name" value="KH_sf_prok-type"/>
</dbReference>
<dbReference type="InterPro" id="IPR036419">
    <property type="entry name" value="Ribosomal_S3_C_sf"/>
</dbReference>
<dbReference type="InterPro" id="IPR005704">
    <property type="entry name" value="Ribosomal_uS3_bac-typ"/>
</dbReference>
<dbReference type="InterPro" id="IPR001351">
    <property type="entry name" value="Ribosomal_uS3_C"/>
</dbReference>
<dbReference type="InterPro" id="IPR018280">
    <property type="entry name" value="Ribosomal_uS3_CS"/>
</dbReference>
<dbReference type="NCBIfam" id="TIGR01009">
    <property type="entry name" value="rpsC_bact"/>
    <property type="match status" value="1"/>
</dbReference>
<dbReference type="PANTHER" id="PTHR11760">
    <property type="entry name" value="30S/40S RIBOSOMAL PROTEIN S3"/>
    <property type="match status" value="1"/>
</dbReference>
<dbReference type="PANTHER" id="PTHR11760:SF19">
    <property type="entry name" value="SMALL RIBOSOMAL SUBUNIT PROTEIN US3C"/>
    <property type="match status" value="1"/>
</dbReference>
<dbReference type="Pfam" id="PF07650">
    <property type="entry name" value="KH_2"/>
    <property type="match status" value="1"/>
</dbReference>
<dbReference type="Pfam" id="PF00189">
    <property type="entry name" value="Ribosomal_S3_C"/>
    <property type="match status" value="1"/>
</dbReference>
<dbReference type="SMART" id="SM00322">
    <property type="entry name" value="KH"/>
    <property type="match status" value="1"/>
</dbReference>
<dbReference type="SUPFAM" id="SSF54814">
    <property type="entry name" value="Prokaryotic type KH domain (KH-domain type II)"/>
    <property type="match status" value="1"/>
</dbReference>
<dbReference type="SUPFAM" id="SSF54821">
    <property type="entry name" value="Ribosomal protein S3 C-terminal domain"/>
    <property type="match status" value="1"/>
</dbReference>
<dbReference type="PROSITE" id="PS50823">
    <property type="entry name" value="KH_TYPE_2"/>
    <property type="match status" value="1"/>
</dbReference>
<dbReference type="PROSITE" id="PS00548">
    <property type="entry name" value="RIBOSOMAL_S3"/>
    <property type="match status" value="1"/>
</dbReference>
<comment type="function">
    <text evidence="1">Binds the lower part of the 30S subunit head. Binds mRNA in the 70S ribosome, positioning it for translation.</text>
</comment>
<comment type="subunit">
    <text evidence="1">Part of the 30S ribosomal subunit. Forms a tight complex with proteins S10 and S14.</text>
</comment>
<comment type="similarity">
    <text evidence="1">Belongs to the universal ribosomal protein uS3 family.</text>
</comment>
<accession>B5ZYU1</accession>
<name>RS3_RHILW</name>
<reference key="1">
    <citation type="journal article" date="2010" name="Stand. Genomic Sci.">
        <title>Complete genome sequence of Rhizobium leguminosarum bv trifolii strain WSM2304, an effective microsymbiont of the South American clover Trifolium polymorphum.</title>
        <authorList>
            <person name="Reeve W."/>
            <person name="O'Hara G."/>
            <person name="Chain P."/>
            <person name="Ardley J."/>
            <person name="Brau L."/>
            <person name="Nandesena K."/>
            <person name="Tiwari R."/>
            <person name="Malfatti S."/>
            <person name="Kiss H."/>
            <person name="Lapidus A."/>
            <person name="Copeland A."/>
            <person name="Nolan M."/>
            <person name="Land M."/>
            <person name="Ivanova N."/>
            <person name="Mavromatis K."/>
            <person name="Markowitz V."/>
            <person name="Kyrpides N."/>
            <person name="Melino V."/>
            <person name="Denton M."/>
            <person name="Yates R."/>
            <person name="Howieson J."/>
        </authorList>
    </citation>
    <scope>NUCLEOTIDE SEQUENCE [LARGE SCALE GENOMIC DNA]</scope>
    <source>
        <strain>WSM2304</strain>
    </source>
</reference>
<feature type="chain" id="PRO_1000141007" description="Small ribosomal subunit protein uS3">
    <location>
        <begin position="1"/>
        <end position="243"/>
    </location>
</feature>
<feature type="domain" description="KH type-2" evidence="1">
    <location>
        <begin position="39"/>
        <end position="107"/>
    </location>
</feature>
<feature type="region of interest" description="Disordered" evidence="2">
    <location>
        <begin position="214"/>
        <end position="243"/>
    </location>
</feature>
<feature type="compositionally biased region" description="Basic and acidic residues" evidence="2">
    <location>
        <begin position="229"/>
        <end position="243"/>
    </location>
</feature>